<sequence length="194" mass="21657">MHNLIPTVIENTGNYERVFDIYSRLLRERIIFLSGEINDPKADTVIAQLLFLESEDSSKDIYLYLNSPGGSITAGLAIYDTMQYIKPDVRTICIGQAASMGAFLLAGGAKGKRESLTYSRIMIHQPWGGISGQASDINIQANEILRLKKLIIDIMSNQIGVDKEKLALDMERDYFMTSSDALKYGLIDSILVRE</sequence>
<feature type="chain" id="PRO_0000179509" description="ATP-dependent Clp protease proteolytic subunit 1">
    <location>
        <begin position="1"/>
        <end position="194"/>
    </location>
</feature>
<feature type="active site" description="Nucleophile" evidence="1">
    <location>
        <position position="99"/>
    </location>
</feature>
<feature type="active site" evidence="1">
    <location>
        <position position="124"/>
    </location>
</feature>
<proteinExistence type="inferred from homology"/>
<keyword id="KW-0963">Cytoplasm</keyword>
<keyword id="KW-0378">Hydrolase</keyword>
<keyword id="KW-0645">Protease</keyword>
<keyword id="KW-1185">Reference proteome</keyword>
<keyword id="KW-0720">Serine protease</keyword>
<evidence type="ECO:0000255" key="1">
    <source>
        <dbReference type="HAMAP-Rule" id="MF_00444"/>
    </source>
</evidence>
<protein>
    <recommendedName>
        <fullName evidence="1">ATP-dependent Clp protease proteolytic subunit 1</fullName>
        <ecNumber evidence="1">3.4.21.92</ecNumber>
    </recommendedName>
    <alternativeName>
        <fullName evidence="1">Endopeptidase Clp 1</fullName>
    </alternativeName>
</protein>
<reference key="1">
    <citation type="journal article" date="1997" name="Nature">
        <title>Genomic sequence of a Lyme disease spirochaete, Borrelia burgdorferi.</title>
        <authorList>
            <person name="Fraser C.M."/>
            <person name="Casjens S."/>
            <person name="Huang W.M."/>
            <person name="Sutton G.G."/>
            <person name="Clayton R.A."/>
            <person name="Lathigra R."/>
            <person name="White O."/>
            <person name="Ketchum K.A."/>
            <person name="Dodson R.J."/>
            <person name="Hickey E.K."/>
            <person name="Gwinn M.L."/>
            <person name="Dougherty B.A."/>
            <person name="Tomb J.-F."/>
            <person name="Fleischmann R.D."/>
            <person name="Richardson D.L."/>
            <person name="Peterson J.D."/>
            <person name="Kerlavage A.R."/>
            <person name="Quackenbush J."/>
            <person name="Salzberg S.L."/>
            <person name="Hanson M."/>
            <person name="van Vugt R."/>
            <person name="Palmer N."/>
            <person name="Adams M.D."/>
            <person name="Gocayne J.D."/>
            <person name="Weidman J.F."/>
            <person name="Utterback T.R."/>
            <person name="Watthey L."/>
            <person name="McDonald L.A."/>
            <person name="Artiach P."/>
            <person name="Bowman C."/>
            <person name="Garland S.A."/>
            <person name="Fujii C."/>
            <person name="Cotton M.D."/>
            <person name="Horst K."/>
            <person name="Roberts K.M."/>
            <person name="Hatch B."/>
            <person name="Smith H.O."/>
            <person name="Venter J.C."/>
        </authorList>
    </citation>
    <scope>NUCLEOTIDE SEQUENCE [LARGE SCALE GENOMIC DNA]</scope>
    <source>
        <strain>ATCC 35210 / DSM 4680 / CIP 102532 / B31</strain>
    </source>
</reference>
<organism>
    <name type="scientific">Borreliella burgdorferi (strain ATCC 35210 / DSM 4680 / CIP 102532 / B31)</name>
    <name type="common">Borrelia burgdorferi</name>
    <dbReference type="NCBI Taxonomy" id="224326"/>
    <lineage>
        <taxon>Bacteria</taxon>
        <taxon>Pseudomonadati</taxon>
        <taxon>Spirochaetota</taxon>
        <taxon>Spirochaetia</taxon>
        <taxon>Spirochaetales</taxon>
        <taxon>Borreliaceae</taxon>
        <taxon>Borreliella</taxon>
    </lineage>
</organism>
<dbReference type="EC" id="3.4.21.92" evidence="1"/>
<dbReference type="EMBL" id="AE000783">
    <property type="protein sequence ID" value="AAC66964.2"/>
    <property type="molecule type" value="Genomic_DNA"/>
</dbReference>
<dbReference type="PIR" id="B70176">
    <property type="entry name" value="B70176"/>
</dbReference>
<dbReference type="RefSeq" id="NP_212745.2">
    <property type="nucleotide sequence ID" value="NC_001318.1"/>
</dbReference>
<dbReference type="SMR" id="O51556"/>
<dbReference type="STRING" id="224326.BB_0611"/>
<dbReference type="MEROPS" id="S14.001"/>
<dbReference type="PaxDb" id="224326-BB_0611"/>
<dbReference type="EnsemblBacteria" id="AAC66964">
    <property type="protein sequence ID" value="AAC66964"/>
    <property type="gene ID" value="BB_0611"/>
</dbReference>
<dbReference type="KEGG" id="bbu:BB_0611"/>
<dbReference type="PATRIC" id="fig|224326.49.peg.1001"/>
<dbReference type="HOGENOM" id="CLU_058707_3_2_12"/>
<dbReference type="OrthoDB" id="9802800at2"/>
<dbReference type="Proteomes" id="UP000001807">
    <property type="component" value="Chromosome"/>
</dbReference>
<dbReference type="GO" id="GO:0005737">
    <property type="term" value="C:cytoplasm"/>
    <property type="evidence" value="ECO:0007669"/>
    <property type="project" value="UniProtKB-SubCell"/>
</dbReference>
<dbReference type="GO" id="GO:0009368">
    <property type="term" value="C:endopeptidase Clp complex"/>
    <property type="evidence" value="ECO:0007669"/>
    <property type="project" value="TreeGrafter"/>
</dbReference>
<dbReference type="GO" id="GO:0004176">
    <property type="term" value="F:ATP-dependent peptidase activity"/>
    <property type="evidence" value="ECO:0007669"/>
    <property type="project" value="InterPro"/>
</dbReference>
<dbReference type="GO" id="GO:0051117">
    <property type="term" value="F:ATPase binding"/>
    <property type="evidence" value="ECO:0007669"/>
    <property type="project" value="TreeGrafter"/>
</dbReference>
<dbReference type="GO" id="GO:0004252">
    <property type="term" value="F:serine-type endopeptidase activity"/>
    <property type="evidence" value="ECO:0007669"/>
    <property type="project" value="UniProtKB-UniRule"/>
</dbReference>
<dbReference type="GO" id="GO:0006515">
    <property type="term" value="P:protein quality control for misfolded or incompletely synthesized proteins"/>
    <property type="evidence" value="ECO:0007669"/>
    <property type="project" value="TreeGrafter"/>
</dbReference>
<dbReference type="CDD" id="cd07017">
    <property type="entry name" value="S14_ClpP_2"/>
    <property type="match status" value="1"/>
</dbReference>
<dbReference type="FunFam" id="3.90.226.10:FF:000001">
    <property type="entry name" value="ATP-dependent Clp protease proteolytic subunit"/>
    <property type="match status" value="1"/>
</dbReference>
<dbReference type="Gene3D" id="3.90.226.10">
    <property type="entry name" value="2-enoyl-CoA Hydratase, Chain A, domain 1"/>
    <property type="match status" value="1"/>
</dbReference>
<dbReference type="HAMAP" id="MF_00444">
    <property type="entry name" value="ClpP"/>
    <property type="match status" value="1"/>
</dbReference>
<dbReference type="InterPro" id="IPR001907">
    <property type="entry name" value="ClpP"/>
</dbReference>
<dbReference type="InterPro" id="IPR029045">
    <property type="entry name" value="ClpP/crotonase-like_dom_sf"/>
</dbReference>
<dbReference type="InterPro" id="IPR023562">
    <property type="entry name" value="ClpP/TepA"/>
</dbReference>
<dbReference type="InterPro" id="IPR018215">
    <property type="entry name" value="ClpP_Ser_AS"/>
</dbReference>
<dbReference type="NCBIfam" id="TIGR00493">
    <property type="entry name" value="clpP"/>
    <property type="match status" value="1"/>
</dbReference>
<dbReference type="NCBIfam" id="NF001368">
    <property type="entry name" value="PRK00277.1"/>
    <property type="match status" value="1"/>
</dbReference>
<dbReference type="NCBIfam" id="NF009205">
    <property type="entry name" value="PRK12553.1"/>
    <property type="match status" value="1"/>
</dbReference>
<dbReference type="PANTHER" id="PTHR10381">
    <property type="entry name" value="ATP-DEPENDENT CLP PROTEASE PROTEOLYTIC SUBUNIT"/>
    <property type="match status" value="1"/>
</dbReference>
<dbReference type="PANTHER" id="PTHR10381:SF70">
    <property type="entry name" value="ATP-DEPENDENT CLP PROTEASE PROTEOLYTIC SUBUNIT"/>
    <property type="match status" value="1"/>
</dbReference>
<dbReference type="Pfam" id="PF00574">
    <property type="entry name" value="CLP_protease"/>
    <property type="match status" value="1"/>
</dbReference>
<dbReference type="PRINTS" id="PR00127">
    <property type="entry name" value="CLPPROTEASEP"/>
</dbReference>
<dbReference type="SUPFAM" id="SSF52096">
    <property type="entry name" value="ClpP/crotonase"/>
    <property type="match status" value="1"/>
</dbReference>
<dbReference type="PROSITE" id="PS00381">
    <property type="entry name" value="CLP_PROTEASE_SER"/>
    <property type="match status" value="1"/>
</dbReference>
<comment type="function">
    <text evidence="1">Cleaves peptides in various proteins in a process that requires ATP hydrolysis. Has a chymotrypsin-like activity. Plays a major role in the degradation of misfolded proteins.</text>
</comment>
<comment type="catalytic activity">
    <reaction evidence="1">
        <text>Hydrolysis of proteins to small peptides in the presence of ATP and magnesium. alpha-casein is the usual test substrate. In the absence of ATP, only oligopeptides shorter than five residues are hydrolyzed (such as succinyl-Leu-Tyr-|-NHMec, and Leu-Tyr-Leu-|-Tyr-Trp, in which cleavage of the -Tyr-|-Leu- and -Tyr-|-Trp bonds also occurs).</text>
        <dbReference type="EC" id="3.4.21.92"/>
    </reaction>
</comment>
<comment type="subunit">
    <text evidence="1">Fourteen ClpP subunits assemble into 2 heptameric rings which stack back to back to give a disk-like structure with a central cavity, resembling the structure of eukaryotic proteasomes.</text>
</comment>
<comment type="subcellular location">
    <subcellularLocation>
        <location evidence="1">Cytoplasm</location>
    </subcellularLocation>
</comment>
<comment type="similarity">
    <text evidence="1">Belongs to the peptidase S14 family.</text>
</comment>
<accession>O51556</accession>
<name>CLPP1_BORBU</name>
<gene>
    <name evidence="1" type="primary">clpP1</name>
    <name type="synonym">clpP-1</name>
    <name type="ordered locus">BB_0611</name>
</gene>